<dbReference type="EC" id="3.6.1.27" evidence="1"/>
<dbReference type="EMBL" id="AE005674">
    <property type="protein sequence ID" value="AAN44574.2"/>
    <property type="molecule type" value="Genomic_DNA"/>
</dbReference>
<dbReference type="EMBL" id="AE014073">
    <property type="protein sequence ID" value="AAP18386.1"/>
    <property type="molecule type" value="Genomic_DNA"/>
</dbReference>
<dbReference type="RefSeq" id="NP_708867.2">
    <property type="nucleotide sequence ID" value="NC_004337.2"/>
</dbReference>
<dbReference type="RefSeq" id="WP_001305111.1">
    <property type="nucleotide sequence ID" value="NZ_WPGW01000061.1"/>
</dbReference>
<dbReference type="SMR" id="P67387"/>
<dbReference type="STRING" id="198214.SF3098"/>
<dbReference type="PaxDb" id="198214-SF3098"/>
<dbReference type="GeneID" id="1026703"/>
<dbReference type="GeneID" id="86861207"/>
<dbReference type="KEGG" id="sfl:SF3098"/>
<dbReference type="KEGG" id="sfx:S3303"/>
<dbReference type="PATRIC" id="fig|198214.7.peg.3676"/>
<dbReference type="HOGENOM" id="CLU_060296_2_0_6"/>
<dbReference type="Proteomes" id="UP000001006">
    <property type="component" value="Chromosome"/>
</dbReference>
<dbReference type="Proteomes" id="UP000002673">
    <property type="component" value="Chromosome"/>
</dbReference>
<dbReference type="GO" id="GO:0005886">
    <property type="term" value="C:plasma membrane"/>
    <property type="evidence" value="ECO:0007669"/>
    <property type="project" value="UniProtKB-SubCell"/>
</dbReference>
<dbReference type="GO" id="GO:0050380">
    <property type="term" value="F:undecaprenyl-diphosphatase activity"/>
    <property type="evidence" value="ECO:0007669"/>
    <property type="project" value="UniProtKB-UniRule"/>
</dbReference>
<dbReference type="GO" id="GO:0071555">
    <property type="term" value="P:cell wall organization"/>
    <property type="evidence" value="ECO:0007669"/>
    <property type="project" value="UniProtKB-KW"/>
</dbReference>
<dbReference type="GO" id="GO:0009252">
    <property type="term" value="P:peptidoglycan biosynthetic process"/>
    <property type="evidence" value="ECO:0007669"/>
    <property type="project" value="UniProtKB-KW"/>
</dbReference>
<dbReference type="GO" id="GO:0008360">
    <property type="term" value="P:regulation of cell shape"/>
    <property type="evidence" value="ECO:0007669"/>
    <property type="project" value="UniProtKB-KW"/>
</dbReference>
<dbReference type="GO" id="GO:0046677">
    <property type="term" value="P:response to antibiotic"/>
    <property type="evidence" value="ECO:0007669"/>
    <property type="project" value="UniProtKB-UniRule"/>
</dbReference>
<dbReference type="HAMAP" id="MF_01006">
    <property type="entry name" value="Undec_diphosphatase"/>
    <property type="match status" value="1"/>
</dbReference>
<dbReference type="InterPro" id="IPR003824">
    <property type="entry name" value="UppP"/>
</dbReference>
<dbReference type="NCBIfam" id="NF001388">
    <property type="entry name" value="PRK00281.1-1"/>
    <property type="match status" value="1"/>
</dbReference>
<dbReference type="NCBIfam" id="NF001389">
    <property type="entry name" value="PRK00281.1-2"/>
    <property type="match status" value="1"/>
</dbReference>
<dbReference type="NCBIfam" id="NF001390">
    <property type="entry name" value="PRK00281.1-4"/>
    <property type="match status" value="1"/>
</dbReference>
<dbReference type="NCBIfam" id="TIGR00753">
    <property type="entry name" value="undec_PP_bacA"/>
    <property type="match status" value="1"/>
</dbReference>
<dbReference type="PANTHER" id="PTHR30622">
    <property type="entry name" value="UNDECAPRENYL-DIPHOSPHATASE"/>
    <property type="match status" value="1"/>
</dbReference>
<dbReference type="PANTHER" id="PTHR30622:SF3">
    <property type="entry name" value="UNDECAPRENYL-DIPHOSPHATASE"/>
    <property type="match status" value="1"/>
</dbReference>
<dbReference type="Pfam" id="PF02673">
    <property type="entry name" value="BacA"/>
    <property type="match status" value="1"/>
</dbReference>
<accession>P67387</accession>
<accession>Q83Q45</accession>
<accession>Q8FDH1</accession>
<name>UPPP_SHIFL</name>
<feature type="chain" id="PRO_0000151196" description="Undecaprenyl-diphosphatase">
    <location>
        <begin position="1"/>
        <end position="273"/>
    </location>
</feature>
<feature type="transmembrane region" description="Helical" evidence="1">
    <location>
        <begin position="6"/>
        <end position="26"/>
    </location>
</feature>
<feature type="transmembrane region" description="Helical" evidence="1">
    <location>
        <begin position="45"/>
        <end position="65"/>
    </location>
</feature>
<feature type="transmembrane region" description="Helical" evidence="1">
    <location>
        <begin position="90"/>
        <end position="110"/>
    </location>
</feature>
<feature type="transmembrane region" description="Helical" evidence="1">
    <location>
        <begin position="116"/>
        <end position="136"/>
    </location>
</feature>
<feature type="transmembrane region" description="Helical" evidence="1">
    <location>
        <begin position="190"/>
        <end position="210"/>
    </location>
</feature>
<feature type="transmembrane region" description="Helical" evidence="1">
    <location>
        <begin position="222"/>
        <end position="242"/>
    </location>
</feature>
<feature type="transmembrane region" description="Helical" evidence="1">
    <location>
        <begin position="252"/>
        <end position="272"/>
    </location>
</feature>
<gene>
    <name evidence="1" type="primary">uppP</name>
    <name type="synonym">bacA</name>
    <name type="synonym">upk</name>
    <name type="ordered locus">SF3098</name>
    <name type="ordered locus">S3303</name>
</gene>
<protein>
    <recommendedName>
        <fullName evidence="1">Undecaprenyl-diphosphatase</fullName>
        <ecNumber evidence="1">3.6.1.27</ecNumber>
    </recommendedName>
    <alternativeName>
        <fullName evidence="1">Bacitracin resistance protein</fullName>
    </alternativeName>
    <alternativeName>
        <fullName evidence="1">Undecaprenyl pyrophosphate phosphatase</fullName>
    </alternativeName>
</protein>
<evidence type="ECO:0000255" key="1">
    <source>
        <dbReference type="HAMAP-Rule" id="MF_01006"/>
    </source>
</evidence>
<sequence>MSDMHSLLIAAILGVVEGLTEFLPVSSTGHMIIVGHLLGFEGDTAKTFEVVIQLGSILAVVVMFWRRLFGLIGIHFGRPLQHEGESKGRLTLIHILLGMIPAVVLGLLFHDTIKSLFNPINVMYALVVGGLLLIAAECLKPKEPRAPGLDDMTYRQAFMIGCFQCLALWPGFSRSGATISGGMLMGVSRYAASEFSFLLAVPMMMGATALDLYKSWGFLTTGDIPMFAVGFITAFVVALIAIKTFLQLIKRISFIPFAIYRFIVAAAVYVVFF</sequence>
<reference key="1">
    <citation type="journal article" date="2002" name="Nucleic Acids Res.">
        <title>Genome sequence of Shigella flexneri 2a: insights into pathogenicity through comparison with genomes of Escherichia coli K12 and O157.</title>
        <authorList>
            <person name="Jin Q."/>
            <person name="Yuan Z."/>
            <person name="Xu J."/>
            <person name="Wang Y."/>
            <person name="Shen Y."/>
            <person name="Lu W."/>
            <person name="Wang J."/>
            <person name="Liu H."/>
            <person name="Yang J."/>
            <person name="Yang F."/>
            <person name="Zhang X."/>
            <person name="Zhang J."/>
            <person name="Yang G."/>
            <person name="Wu H."/>
            <person name="Qu D."/>
            <person name="Dong J."/>
            <person name="Sun L."/>
            <person name="Xue Y."/>
            <person name="Zhao A."/>
            <person name="Gao Y."/>
            <person name="Zhu J."/>
            <person name="Kan B."/>
            <person name="Ding K."/>
            <person name="Chen S."/>
            <person name="Cheng H."/>
            <person name="Yao Z."/>
            <person name="He B."/>
            <person name="Chen R."/>
            <person name="Ma D."/>
            <person name="Qiang B."/>
            <person name="Wen Y."/>
            <person name="Hou Y."/>
            <person name="Yu J."/>
        </authorList>
    </citation>
    <scope>NUCLEOTIDE SEQUENCE [LARGE SCALE GENOMIC DNA]</scope>
    <source>
        <strain>301 / Serotype 2a</strain>
    </source>
</reference>
<reference key="2">
    <citation type="journal article" date="2003" name="Infect. Immun.">
        <title>Complete genome sequence and comparative genomics of Shigella flexneri serotype 2a strain 2457T.</title>
        <authorList>
            <person name="Wei J."/>
            <person name="Goldberg M.B."/>
            <person name="Burland V."/>
            <person name="Venkatesan M.M."/>
            <person name="Deng W."/>
            <person name="Fournier G."/>
            <person name="Mayhew G.F."/>
            <person name="Plunkett G. III"/>
            <person name="Rose D.J."/>
            <person name="Darling A."/>
            <person name="Mau B."/>
            <person name="Perna N.T."/>
            <person name="Payne S.M."/>
            <person name="Runyen-Janecky L.J."/>
            <person name="Zhou S."/>
            <person name="Schwartz D.C."/>
            <person name="Blattner F.R."/>
        </authorList>
    </citation>
    <scope>NUCLEOTIDE SEQUENCE [LARGE SCALE GENOMIC DNA]</scope>
    <source>
        <strain>ATCC 700930 / 2457T / Serotype 2a</strain>
    </source>
</reference>
<proteinExistence type="inferred from homology"/>
<comment type="function">
    <text evidence="1">Catalyzes the dephosphorylation of undecaprenyl diphosphate (UPP). Confers resistance to bacitracin.</text>
</comment>
<comment type="catalytic activity">
    <reaction evidence="1">
        <text>di-trans,octa-cis-undecaprenyl diphosphate + H2O = di-trans,octa-cis-undecaprenyl phosphate + phosphate + H(+)</text>
        <dbReference type="Rhea" id="RHEA:28094"/>
        <dbReference type="ChEBI" id="CHEBI:15377"/>
        <dbReference type="ChEBI" id="CHEBI:15378"/>
        <dbReference type="ChEBI" id="CHEBI:43474"/>
        <dbReference type="ChEBI" id="CHEBI:58405"/>
        <dbReference type="ChEBI" id="CHEBI:60392"/>
        <dbReference type="EC" id="3.6.1.27"/>
    </reaction>
</comment>
<comment type="subcellular location">
    <subcellularLocation>
        <location evidence="1">Cell inner membrane</location>
        <topology evidence="1">Multi-pass membrane protein</topology>
    </subcellularLocation>
</comment>
<comment type="miscellaneous">
    <text>Bacitracin is thought to be involved in the inhibition of peptidoglycan synthesis by sequestering undecaprenyl diphosphate, thereby reducing the pool of lipid carrier available.</text>
</comment>
<comment type="similarity">
    <text evidence="1">Belongs to the UppP family.</text>
</comment>
<keyword id="KW-0046">Antibiotic resistance</keyword>
<keyword id="KW-0997">Cell inner membrane</keyword>
<keyword id="KW-1003">Cell membrane</keyword>
<keyword id="KW-0133">Cell shape</keyword>
<keyword id="KW-0961">Cell wall biogenesis/degradation</keyword>
<keyword id="KW-0378">Hydrolase</keyword>
<keyword id="KW-0472">Membrane</keyword>
<keyword id="KW-0573">Peptidoglycan synthesis</keyword>
<keyword id="KW-1185">Reference proteome</keyword>
<keyword id="KW-0812">Transmembrane</keyword>
<keyword id="KW-1133">Transmembrane helix</keyword>
<organism>
    <name type="scientific">Shigella flexneri</name>
    <dbReference type="NCBI Taxonomy" id="623"/>
    <lineage>
        <taxon>Bacteria</taxon>
        <taxon>Pseudomonadati</taxon>
        <taxon>Pseudomonadota</taxon>
        <taxon>Gammaproteobacteria</taxon>
        <taxon>Enterobacterales</taxon>
        <taxon>Enterobacteriaceae</taxon>
        <taxon>Shigella</taxon>
    </lineage>
</organism>